<dbReference type="EMBL" id="AABR07021006">
    <property type="status" value="NOT_ANNOTATED_CDS"/>
    <property type="molecule type" value="Genomic_DNA"/>
</dbReference>
<dbReference type="EMBL" id="CH473958">
    <property type="protein sequence ID" value="EDM09661.1"/>
    <property type="molecule type" value="Genomic_DNA"/>
</dbReference>
<dbReference type="RefSeq" id="NP_001127975.1">
    <property type="nucleotide sequence ID" value="NM_001134503.2"/>
</dbReference>
<dbReference type="SMR" id="D4AEC2"/>
<dbReference type="FunCoup" id="D4AEC2">
    <property type="interactions" value="3896"/>
</dbReference>
<dbReference type="STRING" id="10116.ENSRNOP00000057155"/>
<dbReference type="iPTMnet" id="D4AEC2"/>
<dbReference type="PhosphoSitePlus" id="D4AEC2"/>
<dbReference type="PaxDb" id="10116-ENSRNOP00000057155"/>
<dbReference type="PeptideAtlas" id="D4AEC2"/>
<dbReference type="Ensembl" id="ENSRNOT00000060410.5">
    <property type="protein sequence ID" value="ENSRNOP00000057155.2"/>
    <property type="gene ID" value="ENSRNOG00000008741.8"/>
</dbReference>
<dbReference type="GeneID" id="289400"/>
<dbReference type="KEGG" id="rno:289400"/>
<dbReference type="UCSC" id="RGD:1310950">
    <property type="organism name" value="rat"/>
</dbReference>
<dbReference type="AGR" id="RGD:1310950"/>
<dbReference type="CTD" id="23271"/>
<dbReference type="RGD" id="1310950">
    <property type="gene designation" value="Camsap2"/>
</dbReference>
<dbReference type="eggNOG" id="KOG3654">
    <property type="taxonomic scope" value="Eukaryota"/>
</dbReference>
<dbReference type="GeneTree" id="ENSGT00950000182975"/>
<dbReference type="HOGENOM" id="CLU_004833_1_0_1"/>
<dbReference type="InParanoid" id="D4AEC2"/>
<dbReference type="OMA" id="KAPQPMG"/>
<dbReference type="OrthoDB" id="2125658at2759"/>
<dbReference type="PhylomeDB" id="D4AEC2"/>
<dbReference type="PRO" id="PR:D4AEC2"/>
<dbReference type="Proteomes" id="UP000002494">
    <property type="component" value="Chromosome 13"/>
</dbReference>
<dbReference type="Proteomes" id="UP000234681">
    <property type="component" value="Chromosome 13"/>
</dbReference>
<dbReference type="Bgee" id="ENSRNOG00000008741">
    <property type="expression patterns" value="Expressed in cerebellum and 19 other cell types or tissues"/>
</dbReference>
<dbReference type="GO" id="GO:0005813">
    <property type="term" value="C:centrosome"/>
    <property type="evidence" value="ECO:0000266"/>
    <property type="project" value="RGD"/>
</dbReference>
<dbReference type="GO" id="GO:0036064">
    <property type="term" value="C:ciliary basal body"/>
    <property type="evidence" value="ECO:0000250"/>
    <property type="project" value="UniProtKB"/>
</dbReference>
<dbReference type="GO" id="GO:0005829">
    <property type="term" value="C:cytosol"/>
    <property type="evidence" value="ECO:0007669"/>
    <property type="project" value="Ensembl"/>
</dbReference>
<dbReference type="GO" id="GO:0005794">
    <property type="term" value="C:Golgi apparatus"/>
    <property type="evidence" value="ECO:0000266"/>
    <property type="project" value="RGD"/>
</dbReference>
<dbReference type="GO" id="GO:0015630">
    <property type="term" value="C:microtubule cytoskeleton"/>
    <property type="evidence" value="ECO:0000266"/>
    <property type="project" value="RGD"/>
</dbReference>
<dbReference type="GO" id="GO:0036449">
    <property type="term" value="C:microtubule minus-end"/>
    <property type="evidence" value="ECO:0000266"/>
    <property type="project" value="RGD"/>
</dbReference>
<dbReference type="GO" id="GO:0005516">
    <property type="term" value="F:calmodulin binding"/>
    <property type="evidence" value="ECO:0007669"/>
    <property type="project" value="InterPro"/>
</dbReference>
<dbReference type="GO" id="GO:0051011">
    <property type="term" value="F:microtubule minus-end binding"/>
    <property type="evidence" value="ECO:0000266"/>
    <property type="project" value="RGD"/>
</dbReference>
<dbReference type="GO" id="GO:0030507">
    <property type="term" value="F:spectrin binding"/>
    <property type="evidence" value="ECO:0007669"/>
    <property type="project" value="InterPro"/>
</dbReference>
<dbReference type="GO" id="GO:0061564">
    <property type="term" value="P:axon development"/>
    <property type="evidence" value="ECO:0000315"/>
    <property type="project" value="UniProtKB"/>
</dbReference>
<dbReference type="GO" id="GO:0031122">
    <property type="term" value="P:cytoplasmic microtubule organization"/>
    <property type="evidence" value="ECO:0000318"/>
    <property type="project" value="GO_Central"/>
</dbReference>
<dbReference type="GO" id="GO:0000226">
    <property type="term" value="P:microtubule cytoskeleton organization"/>
    <property type="evidence" value="ECO:0000250"/>
    <property type="project" value="UniProtKB"/>
</dbReference>
<dbReference type="GO" id="GO:0007026">
    <property type="term" value="P:negative regulation of microtubule depolymerization"/>
    <property type="evidence" value="ECO:0000318"/>
    <property type="project" value="GO_Central"/>
</dbReference>
<dbReference type="GO" id="GO:0050773">
    <property type="term" value="P:regulation of dendrite development"/>
    <property type="evidence" value="ECO:0000315"/>
    <property type="project" value="UniProtKB"/>
</dbReference>
<dbReference type="GO" id="GO:1903358">
    <property type="term" value="P:regulation of Golgi organization"/>
    <property type="evidence" value="ECO:0000250"/>
    <property type="project" value="UniProtKB"/>
</dbReference>
<dbReference type="GO" id="GO:0031113">
    <property type="term" value="P:regulation of microtubule polymerization"/>
    <property type="evidence" value="ECO:0000250"/>
    <property type="project" value="UniProtKB"/>
</dbReference>
<dbReference type="GO" id="GO:0033043">
    <property type="term" value="P:regulation of organelle organization"/>
    <property type="evidence" value="ECO:0000266"/>
    <property type="project" value="RGD"/>
</dbReference>
<dbReference type="FunFam" id="3.10.20.360:FF:000001">
    <property type="entry name" value="Calmodulin-regulated spectrin-associated protein 3 isoform 2"/>
    <property type="match status" value="1"/>
</dbReference>
<dbReference type="Gene3D" id="3.10.20.360">
    <property type="entry name" value="CKK domain"/>
    <property type="match status" value="1"/>
</dbReference>
<dbReference type="InterPro" id="IPR032940">
    <property type="entry name" value="CAMSAP"/>
</dbReference>
<dbReference type="InterPro" id="IPR022613">
    <property type="entry name" value="CAMSAP-like_CH_dom"/>
</dbReference>
<dbReference type="InterPro" id="IPR031372">
    <property type="entry name" value="CAMSAP_CC1"/>
</dbReference>
<dbReference type="InterPro" id="IPR001715">
    <property type="entry name" value="CH_dom"/>
</dbReference>
<dbReference type="InterPro" id="IPR036872">
    <property type="entry name" value="CH_dom_sf"/>
</dbReference>
<dbReference type="InterPro" id="IPR038209">
    <property type="entry name" value="CKK_dom_sf"/>
</dbReference>
<dbReference type="InterPro" id="IPR014797">
    <property type="entry name" value="CKK_domain"/>
</dbReference>
<dbReference type="InterPro" id="IPR011033">
    <property type="entry name" value="PRC_barrel-like_sf"/>
</dbReference>
<dbReference type="PANTHER" id="PTHR21595:SF1">
    <property type="entry name" value="CALMODULIN-REGULATED SPECTRIN-ASSOCIATED PROTEIN 2"/>
    <property type="match status" value="1"/>
</dbReference>
<dbReference type="PANTHER" id="PTHR21595">
    <property type="entry name" value="PATRONIN"/>
    <property type="match status" value="1"/>
</dbReference>
<dbReference type="Pfam" id="PF17095">
    <property type="entry name" value="CAMSAP_CC1"/>
    <property type="match status" value="1"/>
</dbReference>
<dbReference type="Pfam" id="PF11971">
    <property type="entry name" value="CAMSAP_CH"/>
    <property type="match status" value="1"/>
</dbReference>
<dbReference type="Pfam" id="PF08683">
    <property type="entry name" value="CAMSAP_CKK"/>
    <property type="match status" value="1"/>
</dbReference>
<dbReference type="SMART" id="SM01051">
    <property type="entry name" value="CAMSAP_CKK"/>
    <property type="match status" value="1"/>
</dbReference>
<dbReference type="SUPFAM" id="SSF47576">
    <property type="entry name" value="Calponin-homology domain, CH-domain"/>
    <property type="match status" value="1"/>
</dbReference>
<dbReference type="SUPFAM" id="SSF50346">
    <property type="entry name" value="PRC-barrel domain"/>
    <property type="match status" value="1"/>
</dbReference>
<dbReference type="PROSITE" id="PS50021">
    <property type="entry name" value="CH"/>
    <property type="match status" value="1"/>
</dbReference>
<dbReference type="PROSITE" id="PS51508">
    <property type="entry name" value="CKK"/>
    <property type="match status" value="1"/>
</dbReference>
<proteinExistence type="evidence at protein level"/>
<sequence length="1470" mass="165612">MGDAADPREVRRTFIVPAIKPFDHYDFSRAKIACNLAWLVAKAFGTETVPEELREPFYTDQYDQEHIKPPVVNLLLSAELYCRAGSLILKSDAAKPLLGHDAVIQALAHKGLYVTDQEKLVTERDLHKKPIQMSAHLAMIDTLMMAYTVEMVSIEKVIACAQQYSAFFQATDLPYDIEDAVMYWINKVNEHLKDIMEQEQKSKEHHTAEAPGGQKSPSKWFWKLVPARYRKEQTLLKQLPCIPLVENLLKDGTDGCALAALIHFYCPAVVRLEDICLKETMSLADSLYNLQLIQEFCQEYLNHCCHFSLEDMLYAASSIKSNYLVFMAELFWWFEVVKPSFVQPRVVRPQGAEPAKDMPSVPVLNAAKRNVLDSSSSSDFTSRYTRPQTHSSVSGGIRRSSSMSYVDGFIGTWPKEKRTSVHGVSFDISFDKEDNAQSSTPNRGIIRSVSNEGLNNSRASKHIRKNLSFKPVNGGEEESIEEELHVDPHGDLKSYMPLSTNELNSNENTHHKLPNGALQNRVLLDEFGNQIETPSIEEALQIIHDTEKPPHTARPDQIANGFFLHGQDLSLLNSNIKLSQSSPDNITDPKGALSPITDTTEVDTGIHVPSEDIPETMDEDSSLRDYTVSLDSDMDDASKFLQDYDIRASNPREALSPCPSTISTKSQPGSSASSSSGVKMTSFAEQKFRKLNHTDGKSSGSSSQKTTPEGSELNIPHMVSWAQIPEESGVAQGRDTTQLLASEMVHLRMRLEEKRRAIEAQKKKMEAAFTKQRQKMGRTAFLTVVKKKGDGISPLREEAAGAEDEKVYTDRAKEKESQKMDGQRSKSLADIKESMENPQGKWLKSPSTPVDPEKQWNLTSPSEETLNEGELLEYTKSIEKLNSSLHFLQQEMQRLSLQQEMLMQMREQQSWVISPPQPSPQKQIRDFKPRQAGLSSAAAPFSADSPRPTHPSPQSSTRKSASFSVKNQRTPRPNELKITPLNRTLTPPRSVDSLPRLRRFSPSQVPIQTRSFVCFGDDGEPQKEPKPKEEIKKEPSECKGTLESCDHNPGEKEVKPLESTVSEVLSQPITETVCVTPNEDQLNQPTDPPPKPVFPPTAPKNVNLIEVSLSDLKPPEKADVSVEKFDGESDKEQFDDDQKVCCGFFFKDDQKAENDMAVKRAALLEKRLRREKETQLRKQQLEAEMEHRKEETRRKTEEERQKKEDERARREFIRQEYMRRKQLKLMEDMDTVIKPRPQVAKQKKQRPKSIHRDHIESPKTPIKGPPVSSLSLASLNTGDTESVHSGKRTPRSESVEGFLSPSRCGSRNGEKDWENASTTSSVASGTEYTGPKLYKEPSAKSNKHIIQNALAHCCLAGKVNEGQKKKILEEMEKSDANNFLILFRDSGCQFRSLYTYCPETEEINKLTGIGPKSITKKMIEGLYKYNSDRKQFSHIPAKTLSASVDAITIHSHLWQTKRPVTPKKLLPTKA</sequence>
<reference key="1">
    <citation type="journal article" date="2004" name="Nature">
        <title>Genome sequence of the Brown Norway rat yields insights into mammalian evolution.</title>
        <authorList>
            <person name="Gibbs R.A."/>
            <person name="Weinstock G.M."/>
            <person name="Metzker M.L."/>
            <person name="Muzny D.M."/>
            <person name="Sodergren E.J."/>
            <person name="Scherer S."/>
            <person name="Scott G."/>
            <person name="Steffen D."/>
            <person name="Worley K.C."/>
            <person name="Burch P.E."/>
            <person name="Okwuonu G."/>
            <person name="Hines S."/>
            <person name="Lewis L."/>
            <person name="Deramo C."/>
            <person name="Delgado O."/>
            <person name="Dugan-Rocha S."/>
            <person name="Miner G."/>
            <person name="Morgan M."/>
            <person name="Hawes A."/>
            <person name="Gill R."/>
            <person name="Holt R.A."/>
            <person name="Adams M.D."/>
            <person name="Amanatides P.G."/>
            <person name="Baden-Tillson H."/>
            <person name="Barnstead M."/>
            <person name="Chin S."/>
            <person name="Evans C.A."/>
            <person name="Ferriera S."/>
            <person name="Fosler C."/>
            <person name="Glodek A."/>
            <person name="Gu Z."/>
            <person name="Jennings D."/>
            <person name="Kraft C.L."/>
            <person name="Nguyen T."/>
            <person name="Pfannkoch C.M."/>
            <person name="Sitter C."/>
            <person name="Sutton G.G."/>
            <person name="Venter J.C."/>
            <person name="Woodage T."/>
            <person name="Smith D."/>
            <person name="Lee H.-M."/>
            <person name="Gustafson E."/>
            <person name="Cahill P."/>
            <person name="Kana A."/>
            <person name="Doucette-Stamm L."/>
            <person name="Weinstock K."/>
            <person name="Fechtel K."/>
            <person name="Weiss R.B."/>
            <person name="Dunn D.M."/>
            <person name="Green E.D."/>
            <person name="Blakesley R.W."/>
            <person name="Bouffard G.G."/>
            <person name="De Jong P.J."/>
            <person name="Osoegawa K."/>
            <person name="Zhu B."/>
            <person name="Marra M."/>
            <person name="Schein J."/>
            <person name="Bosdet I."/>
            <person name="Fjell C."/>
            <person name="Jones S."/>
            <person name="Krzywinski M."/>
            <person name="Mathewson C."/>
            <person name="Siddiqui A."/>
            <person name="Wye N."/>
            <person name="McPherson J."/>
            <person name="Zhao S."/>
            <person name="Fraser C.M."/>
            <person name="Shetty J."/>
            <person name="Shatsman S."/>
            <person name="Geer K."/>
            <person name="Chen Y."/>
            <person name="Abramzon S."/>
            <person name="Nierman W.C."/>
            <person name="Havlak P.H."/>
            <person name="Chen R."/>
            <person name="Durbin K.J."/>
            <person name="Egan A."/>
            <person name="Ren Y."/>
            <person name="Song X.-Z."/>
            <person name="Li B."/>
            <person name="Liu Y."/>
            <person name="Qin X."/>
            <person name="Cawley S."/>
            <person name="Cooney A.J."/>
            <person name="D'Souza L.M."/>
            <person name="Martin K."/>
            <person name="Wu J.Q."/>
            <person name="Gonzalez-Garay M.L."/>
            <person name="Jackson A.R."/>
            <person name="Kalafus K.J."/>
            <person name="McLeod M.P."/>
            <person name="Milosavljevic A."/>
            <person name="Virk D."/>
            <person name="Volkov A."/>
            <person name="Wheeler D.A."/>
            <person name="Zhang Z."/>
            <person name="Bailey J.A."/>
            <person name="Eichler E.E."/>
            <person name="Tuzun E."/>
            <person name="Birney E."/>
            <person name="Mongin E."/>
            <person name="Ureta-Vidal A."/>
            <person name="Woodwark C."/>
            <person name="Zdobnov E."/>
            <person name="Bork P."/>
            <person name="Suyama M."/>
            <person name="Torrents D."/>
            <person name="Alexandersson M."/>
            <person name="Trask B.J."/>
            <person name="Young J.M."/>
            <person name="Huang H."/>
            <person name="Wang H."/>
            <person name="Xing H."/>
            <person name="Daniels S."/>
            <person name="Gietzen D."/>
            <person name="Schmidt J."/>
            <person name="Stevens K."/>
            <person name="Vitt U."/>
            <person name="Wingrove J."/>
            <person name="Camara F."/>
            <person name="Mar Alba M."/>
            <person name="Abril J.F."/>
            <person name="Guigo R."/>
            <person name="Smit A."/>
            <person name="Dubchak I."/>
            <person name="Rubin E.M."/>
            <person name="Couronne O."/>
            <person name="Poliakov A."/>
            <person name="Huebner N."/>
            <person name="Ganten D."/>
            <person name="Goesele C."/>
            <person name="Hummel O."/>
            <person name="Kreitler T."/>
            <person name="Lee Y.-A."/>
            <person name="Monti J."/>
            <person name="Schulz H."/>
            <person name="Zimdahl H."/>
            <person name="Himmelbauer H."/>
            <person name="Lehrach H."/>
            <person name="Jacob H.J."/>
            <person name="Bromberg S."/>
            <person name="Gullings-Handley J."/>
            <person name="Jensen-Seaman M.I."/>
            <person name="Kwitek A.E."/>
            <person name="Lazar J."/>
            <person name="Pasko D."/>
            <person name="Tonellato P.J."/>
            <person name="Twigger S."/>
            <person name="Ponting C.P."/>
            <person name="Duarte J.M."/>
            <person name="Rice S."/>
            <person name="Goodstadt L."/>
            <person name="Beatson S.A."/>
            <person name="Emes R.D."/>
            <person name="Winter E.E."/>
            <person name="Webber C."/>
            <person name="Brandt P."/>
            <person name="Nyakatura G."/>
            <person name="Adetobi M."/>
            <person name="Chiaromonte F."/>
            <person name="Elnitski L."/>
            <person name="Eswara P."/>
            <person name="Hardison R.C."/>
            <person name="Hou M."/>
            <person name="Kolbe D."/>
            <person name="Makova K."/>
            <person name="Miller W."/>
            <person name="Nekrutenko A."/>
            <person name="Riemer C."/>
            <person name="Schwartz S."/>
            <person name="Taylor J."/>
            <person name="Yang S."/>
            <person name="Zhang Y."/>
            <person name="Lindpaintner K."/>
            <person name="Andrews T.D."/>
            <person name="Caccamo M."/>
            <person name="Clamp M."/>
            <person name="Clarke L."/>
            <person name="Curwen V."/>
            <person name="Durbin R.M."/>
            <person name="Eyras E."/>
            <person name="Searle S.M."/>
            <person name="Cooper G.M."/>
            <person name="Batzoglou S."/>
            <person name="Brudno M."/>
            <person name="Sidow A."/>
            <person name="Stone E.A."/>
            <person name="Payseur B.A."/>
            <person name="Bourque G."/>
            <person name="Lopez-Otin C."/>
            <person name="Puente X.S."/>
            <person name="Chakrabarti K."/>
            <person name="Chatterji S."/>
            <person name="Dewey C."/>
            <person name="Pachter L."/>
            <person name="Bray N."/>
            <person name="Yap V.B."/>
            <person name="Caspi A."/>
            <person name="Tesler G."/>
            <person name="Pevzner P.A."/>
            <person name="Haussler D."/>
            <person name="Roskin K.M."/>
            <person name="Baertsch R."/>
            <person name="Clawson H."/>
            <person name="Furey T.S."/>
            <person name="Hinrichs A.S."/>
            <person name="Karolchik D."/>
            <person name="Kent W.J."/>
            <person name="Rosenbloom K.R."/>
            <person name="Trumbower H."/>
            <person name="Weirauch M."/>
            <person name="Cooper D.N."/>
            <person name="Stenson P.D."/>
            <person name="Ma B."/>
            <person name="Brent M."/>
            <person name="Arumugam M."/>
            <person name="Shteynberg D."/>
            <person name="Copley R.R."/>
            <person name="Taylor M.S."/>
            <person name="Riethman H."/>
            <person name="Mudunuri U."/>
            <person name="Peterson J."/>
            <person name="Guyer M."/>
            <person name="Felsenfeld A."/>
            <person name="Old S."/>
            <person name="Mockrin S."/>
            <person name="Collins F.S."/>
        </authorList>
    </citation>
    <scope>NUCLEOTIDE SEQUENCE [LARGE SCALE GENOMIC DNA]</scope>
    <source>
        <strain>Brown Norway</strain>
    </source>
</reference>
<reference key="2">
    <citation type="submission" date="2005-09" db="EMBL/GenBank/DDBJ databases">
        <authorList>
            <person name="Mural R.J."/>
            <person name="Adams M.D."/>
            <person name="Myers E.W."/>
            <person name="Smith H.O."/>
            <person name="Venter J.C."/>
        </authorList>
    </citation>
    <scope>NUCLEOTIDE SEQUENCE [LARGE SCALE GENOMIC DNA]</scope>
</reference>
<reference key="3">
    <citation type="journal article" date="2012" name="Nat. Commun.">
        <title>Quantitative maps of protein phosphorylation sites across 14 different rat organs and tissues.</title>
        <authorList>
            <person name="Lundby A."/>
            <person name="Secher A."/>
            <person name="Lage K."/>
            <person name="Nordsborg N.B."/>
            <person name="Dmytriyev A."/>
            <person name="Lundby C."/>
            <person name="Olsen J.V."/>
        </authorList>
    </citation>
    <scope>PHOSPHORYLATION [LARGE SCALE ANALYSIS] AT SER-450 AND SER-1129</scope>
    <scope>IDENTIFICATION BY MASS SPECTROMETRY [LARGE SCALE ANALYSIS]</scope>
</reference>
<reference key="4">
    <citation type="journal article" date="2014" name="Neuron">
        <title>Microtubule minus-end binding protein CAMSAP2 controls axon specification and dendrite development.</title>
        <authorList>
            <person name="Yau K.W."/>
            <person name="van Beuningen S.F."/>
            <person name="Cunha-Ferreira I."/>
            <person name="Cloin B.M."/>
            <person name="van Battum E.Y."/>
            <person name="Will L."/>
            <person name="Schaetzle P."/>
            <person name="Tas R.P."/>
            <person name="van Krugten J."/>
            <person name="Katrukha E.A."/>
            <person name="Jiang K."/>
            <person name="Wulf P.S."/>
            <person name="Mikhaylova M."/>
            <person name="Harterink M."/>
            <person name="Pasterkamp R.J."/>
            <person name="Akhmanova A."/>
            <person name="Kapitein L.C."/>
            <person name="Hoogenraad C.C."/>
        </authorList>
    </citation>
    <scope>FUNCTION</scope>
    <scope>TISSUE SPECIFICITY</scope>
</reference>
<gene>
    <name evidence="9" type="primary">Camsap2</name>
</gene>
<comment type="function">
    <text evidence="1 7">Key microtubule-organizing protein that specifically binds the minus-end of non-centrosomal microtubules and regulates their dynamics and organization (PubMed:24908486). Specifically recognizes growing microtubule minus-ends and autonomously decorates and stabilizes microtubule lattice formed by microtubule minus-end polymerization (By similarity). Acts on free microtubule minus-ends that are not capped by microtubule-nucleating proteins or other factors and protects microtubule minus-ends from depolymerization (By similarity). In addition, it also reduces the velocity of microtubule polymerization (By similarity). Through the microtubule cytoskeleton, also regulates the organization of cellular organelles including the Golgi and the early endosomes (By similarity). Essential for the tethering, but not for nucleation of non-centrosomal microtubules at the Golgi: together with Golgi-associated proteins AKAP9 and PDE4DIP, required to tether non-centrosomal minus-end microtubules to the Golgi, an important step for polarized cell movement (By similarity). Also acts as a regulator of neuronal polarity and development: localizes to non-centrosomal microtubule minus-ends in neurons and stabilizes non-centrosomal microtubules, which is required for neuronal polarity, axon specification and dendritic branch formation (PubMed:24908486). Through the microtubule cytoskeleton, regulates the autophagosome transport (By similarity).</text>
</comment>
<comment type="subunit">
    <text evidence="1 2">Interacts with CAMSAP3 (By similarity). Interacts with KATNA1 and KATNB1; leading to regulate the length of CAMSAP2-decorated microtubule stretches. Interacts with a complex formed by AKAP9 and PDE4DIP; this interaction, which is PDE4DIP isoform-specific, recruits CAMSAP2 to the Golgi. Interacts with MAPRE1/EB1 (By similarity).</text>
</comment>
<comment type="subcellular location">
    <subcellularLocation>
        <location evidence="1">Cytoplasm</location>
        <location evidence="1">Cytoskeleton</location>
    </subcellularLocation>
    <subcellularLocation>
        <location evidence="1">Golgi apparatus</location>
    </subcellularLocation>
    <subcellularLocation>
        <location evidence="2">Cytoplasm</location>
        <location evidence="2">Cytoskeleton</location>
        <location evidence="2">Cilium basal body</location>
    </subcellularLocation>
    <subcellularLocation>
        <location evidence="2">Cytoplasm</location>
    </subcellularLocation>
    <text evidence="1">Associated with the minus-end of microtubules and also detected at the centrosomes. Decorates the minus-end of microtubules by decreasing the rate of tubulin incorporation and remaining bound. The length of CAMSAP2-decorated stretches on the minus-end of microtubules is dependent on MAPRE1/EB1 and MAPRE3/EB3, which promote elongation of CAMSAP2-decorated microtubule stretches. Recruited to the Golgi apparatus by AKAP9 and PDE4DIP. In neurons, localizes to the minus-end of microtubules in axon and dendrites.</text>
</comment>
<comment type="tissue specificity">
    <text evidence="7">Present in the soma, axon, and dendritic shaft of hippocampal neurons (at protein level) (PubMed:24908486).</text>
</comment>
<comment type="domain">
    <text evidence="1 5">The CKK domain binds microtubules and specifically recognizes the minus-end of microtubules.</text>
</comment>
<comment type="domain">
    <text evidence="1">The MBD (microtubule-binding domain) region can recognize some features of the microtubule lattice, which might contribute to the specific decoration of growing microtubule minus-ends by CAMSAP2.</text>
</comment>
<comment type="similarity">
    <text evidence="5">Belongs to the CAMSAP1 family.</text>
</comment>
<accession>D4AEC2</accession>
<accession>A0A0G2K7K9</accession>
<feature type="chain" id="PRO_0000442463" description="Calmodulin-regulated spectrin-associated protein 2">
    <location>
        <begin position="1"/>
        <end position="1470"/>
    </location>
</feature>
<feature type="domain" description="Calponin-homology (CH)" evidence="4">
    <location>
        <begin position="222"/>
        <end position="335"/>
    </location>
</feature>
<feature type="domain" description="CKK" evidence="5">
    <location>
        <begin position="1330"/>
        <end position="1464"/>
    </location>
</feature>
<feature type="region of interest" description="Disordered" evidence="6">
    <location>
        <begin position="374"/>
        <end position="397"/>
    </location>
</feature>
<feature type="region of interest" description="Disordered" evidence="6">
    <location>
        <begin position="580"/>
        <end position="622"/>
    </location>
</feature>
<feature type="region of interest" description="Disordered" evidence="6">
    <location>
        <begin position="648"/>
        <end position="712"/>
    </location>
</feature>
<feature type="region of interest" description="Disordered" evidence="6">
    <location>
        <begin position="796"/>
        <end position="864"/>
    </location>
</feature>
<feature type="region of interest" description="MBD region" evidence="1">
    <location>
        <begin position="905"/>
        <end position="1016"/>
    </location>
</feature>
<feature type="region of interest" description="Disordered" evidence="6">
    <location>
        <begin position="930"/>
        <end position="1059"/>
    </location>
</feature>
<feature type="region of interest" description="Disordered" evidence="6">
    <location>
        <begin position="1078"/>
        <end position="1099"/>
    </location>
</feature>
<feature type="region of interest" description="Disordered" evidence="6">
    <location>
        <begin position="1167"/>
        <end position="1327"/>
    </location>
</feature>
<feature type="coiled-coil region" evidence="3">
    <location>
        <begin position="739"/>
        <end position="776"/>
    </location>
</feature>
<feature type="coiled-coil region" evidence="3">
    <location>
        <begin position="870"/>
        <end position="909"/>
    </location>
</feature>
<feature type="coiled-coil region" evidence="3">
    <location>
        <begin position="1147"/>
        <end position="1219"/>
    </location>
</feature>
<feature type="compositionally biased region" description="Polar residues" evidence="6">
    <location>
        <begin position="380"/>
        <end position="390"/>
    </location>
</feature>
<feature type="compositionally biased region" description="Low complexity" evidence="6">
    <location>
        <begin position="663"/>
        <end position="682"/>
    </location>
</feature>
<feature type="compositionally biased region" description="Basic and acidic residues" evidence="6">
    <location>
        <begin position="686"/>
        <end position="696"/>
    </location>
</feature>
<feature type="compositionally biased region" description="Basic and acidic residues" evidence="6">
    <location>
        <begin position="796"/>
        <end position="835"/>
    </location>
</feature>
<feature type="compositionally biased region" description="Low complexity" evidence="6">
    <location>
        <begin position="935"/>
        <end position="946"/>
    </location>
</feature>
<feature type="compositionally biased region" description="Polar residues" evidence="6">
    <location>
        <begin position="952"/>
        <end position="971"/>
    </location>
</feature>
<feature type="compositionally biased region" description="Polar residues" evidence="6">
    <location>
        <begin position="1001"/>
        <end position="1011"/>
    </location>
</feature>
<feature type="compositionally biased region" description="Basic and acidic residues" evidence="6">
    <location>
        <begin position="1020"/>
        <end position="1037"/>
    </location>
</feature>
<feature type="compositionally biased region" description="Basic and acidic residues" evidence="6">
    <location>
        <begin position="1044"/>
        <end position="1056"/>
    </location>
</feature>
<feature type="compositionally biased region" description="Pro residues" evidence="6">
    <location>
        <begin position="1086"/>
        <end position="1098"/>
    </location>
</feature>
<feature type="compositionally biased region" description="Basic and acidic residues" evidence="6">
    <location>
        <begin position="1167"/>
        <end position="1233"/>
    </location>
</feature>
<feature type="compositionally biased region" description="Polar residues" evidence="6">
    <location>
        <begin position="1268"/>
        <end position="1280"/>
    </location>
</feature>
<feature type="compositionally biased region" description="Polar residues" evidence="6">
    <location>
        <begin position="1315"/>
        <end position="1327"/>
    </location>
</feature>
<feature type="modified residue" description="Phosphoserine" evidence="1">
    <location>
        <position position="402"/>
    </location>
</feature>
<feature type="modified residue" description="Phosphoserine" evidence="2">
    <location>
        <position position="404"/>
    </location>
</feature>
<feature type="modified residue" description="Phosphothreonine" evidence="2">
    <location>
        <position position="412"/>
    </location>
</feature>
<feature type="modified residue" description="Phosphoserine" evidence="10">
    <location>
        <position position="450"/>
    </location>
</feature>
<feature type="modified residue" description="Phosphoserine" evidence="1">
    <location>
        <position position="581"/>
    </location>
</feature>
<feature type="modified residue" description="Phosphoserine" evidence="1">
    <location>
        <position position="582"/>
    </location>
</feature>
<feature type="modified residue" description="Phosphoserine" evidence="2">
    <location>
        <position position="594"/>
    </location>
</feature>
<feature type="modified residue" description="Phosphoserine" evidence="1">
    <location>
        <position position="656"/>
    </location>
</feature>
<feature type="modified residue" description="Phosphothreonine" evidence="2">
    <location>
        <position position="661"/>
    </location>
</feature>
<feature type="modified residue" description="Phosphoserine" evidence="2">
    <location>
        <position position="663"/>
    </location>
</feature>
<feature type="modified residue" description="Phosphoserine" evidence="1">
    <location>
        <position position="845"/>
    </location>
</feature>
<feature type="modified residue" description="Phosphoserine" evidence="1">
    <location>
        <position position="914"/>
    </location>
</feature>
<feature type="modified residue" description="Phosphoserine" evidence="1">
    <location>
        <position position="919"/>
    </location>
</feature>
<feature type="modified residue" description="Phosphothreonine" evidence="1">
    <location>
        <position position="979"/>
    </location>
</feature>
<feature type="modified residue" description="Phosphothreonine" evidence="1">
    <location>
        <position position="984"/>
    </location>
</feature>
<feature type="modified residue" description="Phosphothreonine" evidence="1">
    <location>
        <position position="986"/>
    </location>
</feature>
<feature type="modified residue" description="Phosphoserine" evidence="1">
    <location>
        <position position="990"/>
    </location>
</feature>
<feature type="modified residue" description="Phosphoserine" evidence="1">
    <location>
        <position position="1001"/>
    </location>
</feature>
<feature type="modified residue" description="Phosphoserine" evidence="10">
    <location>
        <position position="1129"/>
    </location>
</feature>
<feature type="modified residue" description="Phosphoserine" evidence="1">
    <location>
        <position position="1294"/>
    </location>
</feature>
<feature type="modified residue" description="Phosphoserine" evidence="1">
    <location>
        <position position="1300"/>
    </location>
</feature>
<feature type="modified residue" description="Phosphoserine" evidence="1">
    <location>
        <position position="1302"/>
    </location>
</feature>
<organism>
    <name type="scientific">Rattus norvegicus</name>
    <name type="common">Rat</name>
    <dbReference type="NCBI Taxonomy" id="10116"/>
    <lineage>
        <taxon>Eukaryota</taxon>
        <taxon>Metazoa</taxon>
        <taxon>Chordata</taxon>
        <taxon>Craniata</taxon>
        <taxon>Vertebrata</taxon>
        <taxon>Euteleostomi</taxon>
        <taxon>Mammalia</taxon>
        <taxon>Eutheria</taxon>
        <taxon>Euarchontoglires</taxon>
        <taxon>Glires</taxon>
        <taxon>Rodentia</taxon>
        <taxon>Myomorpha</taxon>
        <taxon>Muroidea</taxon>
        <taxon>Muridae</taxon>
        <taxon>Murinae</taxon>
        <taxon>Rattus</taxon>
    </lineage>
</organism>
<keyword id="KW-0966">Cell projection</keyword>
<keyword id="KW-0175">Coiled coil</keyword>
<keyword id="KW-0963">Cytoplasm</keyword>
<keyword id="KW-0206">Cytoskeleton</keyword>
<keyword id="KW-0333">Golgi apparatus</keyword>
<keyword id="KW-0493">Microtubule</keyword>
<keyword id="KW-0597">Phosphoprotein</keyword>
<keyword id="KW-1185">Reference proteome</keyword>
<evidence type="ECO:0000250" key="1">
    <source>
        <dbReference type="UniProtKB" id="Q08AD1"/>
    </source>
</evidence>
<evidence type="ECO:0000250" key="2">
    <source>
        <dbReference type="UniProtKB" id="Q8C1B1"/>
    </source>
</evidence>
<evidence type="ECO:0000255" key="3"/>
<evidence type="ECO:0000255" key="4">
    <source>
        <dbReference type="PROSITE-ProRule" id="PRU00044"/>
    </source>
</evidence>
<evidence type="ECO:0000255" key="5">
    <source>
        <dbReference type="PROSITE-ProRule" id="PRU00841"/>
    </source>
</evidence>
<evidence type="ECO:0000256" key="6">
    <source>
        <dbReference type="SAM" id="MobiDB-lite"/>
    </source>
</evidence>
<evidence type="ECO:0000269" key="7">
    <source>
    </source>
</evidence>
<evidence type="ECO:0000305" key="8"/>
<evidence type="ECO:0000312" key="9">
    <source>
        <dbReference type="RGD" id="1310950"/>
    </source>
</evidence>
<evidence type="ECO:0007744" key="10">
    <source>
    </source>
</evidence>
<name>CAMP2_RAT</name>
<protein>
    <recommendedName>
        <fullName evidence="8">Calmodulin-regulated spectrin-associated protein 2</fullName>
    </recommendedName>
</protein>